<accession>B2S2Q4</accession>
<name>RS4_TREPS</name>
<organism>
    <name type="scientific">Treponema pallidum subsp. pallidum (strain SS14)</name>
    <dbReference type="NCBI Taxonomy" id="455434"/>
    <lineage>
        <taxon>Bacteria</taxon>
        <taxon>Pseudomonadati</taxon>
        <taxon>Spirochaetota</taxon>
        <taxon>Spirochaetia</taxon>
        <taxon>Spirochaetales</taxon>
        <taxon>Treponemataceae</taxon>
        <taxon>Treponema</taxon>
    </lineage>
</organism>
<comment type="function">
    <text evidence="1">One of the primary rRNA binding proteins, it binds directly to 16S rRNA where it nucleates assembly of the body of the 30S subunit.</text>
</comment>
<comment type="function">
    <text evidence="1">With S5 and S12 plays an important role in translational accuracy.</text>
</comment>
<comment type="subunit">
    <text evidence="1">Part of the 30S ribosomal subunit. Contacts protein S5. The interaction surface between S4 and S5 is involved in control of translational fidelity.</text>
</comment>
<comment type="similarity">
    <text evidence="1">Belongs to the universal ribosomal protein uS4 family.</text>
</comment>
<sequence length="204" mass="23409">MAVKRARGKIVRRLGINIFGNPKYTRLLGKKPAPPGKEHGVKQRAKVSVYGEQLKEKQKFRFAYGMSERQFRNLFAQAHRMKGVTGNNMLSLMERRLDNTVFRMGFAISRVQARQMVSHRYFLINGKTANIPSMRISAHDVITTKNRKGIHSIIRHNLTLSQGQRGSWLNVDEEQLSATVSELPRAQDIHPVGNIQHIVEYYSR</sequence>
<proteinExistence type="inferred from homology"/>
<gene>
    <name evidence="1" type="primary">rpsD</name>
    <name type="ordered locus">TPASS_0306</name>
</gene>
<dbReference type="EMBL" id="CP000805">
    <property type="protein sequence ID" value="ACD70733.1"/>
    <property type="molecule type" value="Genomic_DNA"/>
</dbReference>
<dbReference type="RefSeq" id="WP_010881755.1">
    <property type="nucleotide sequence ID" value="NC_021508.1"/>
</dbReference>
<dbReference type="SMR" id="B2S2Q4"/>
<dbReference type="GeneID" id="93876092"/>
<dbReference type="KEGG" id="tpp:TPASS_0306"/>
<dbReference type="PATRIC" id="fig|455434.6.peg.308"/>
<dbReference type="Proteomes" id="UP000001202">
    <property type="component" value="Chromosome"/>
</dbReference>
<dbReference type="GO" id="GO:0015935">
    <property type="term" value="C:small ribosomal subunit"/>
    <property type="evidence" value="ECO:0007669"/>
    <property type="project" value="InterPro"/>
</dbReference>
<dbReference type="GO" id="GO:0019843">
    <property type="term" value="F:rRNA binding"/>
    <property type="evidence" value="ECO:0007669"/>
    <property type="project" value="UniProtKB-UniRule"/>
</dbReference>
<dbReference type="GO" id="GO:0003735">
    <property type="term" value="F:structural constituent of ribosome"/>
    <property type="evidence" value="ECO:0007669"/>
    <property type="project" value="InterPro"/>
</dbReference>
<dbReference type="GO" id="GO:0042274">
    <property type="term" value="P:ribosomal small subunit biogenesis"/>
    <property type="evidence" value="ECO:0007669"/>
    <property type="project" value="TreeGrafter"/>
</dbReference>
<dbReference type="GO" id="GO:0006412">
    <property type="term" value="P:translation"/>
    <property type="evidence" value="ECO:0007669"/>
    <property type="project" value="UniProtKB-UniRule"/>
</dbReference>
<dbReference type="CDD" id="cd00165">
    <property type="entry name" value="S4"/>
    <property type="match status" value="1"/>
</dbReference>
<dbReference type="FunFam" id="3.10.290.10:FF:000001">
    <property type="entry name" value="30S ribosomal protein S4"/>
    <property type="match status" value="1"/>
</dbReference>
<dbReference type="Gene3D" id="1.10.1050.10">
    <property type="entry name" value="Ribosomal Protein S4 Delta 41, Chain A, domain 1"/>
    <property type="match status" value="1"/>
</dbReference>
<dbReference type="Gene3D" id="3.10.290.10">
    <property type="entry name" value="RNA-binding S4 domain"/>
    <property type="match status" value="1"/>
</dbReference>
<dbReference type="HAMAP" id="MF_01306_B">
    <property type="entry name" value="Ribosomal_uS4_B"/>
    <property type="match status" value="1"/>
</dbReference>
<dbReference type="InterPro" id="IPR022801">
    <property type="entry name" value="Ribosomal_uS4"/>
</dbReference>
<dbReference type="InterPro" id="IPR005709">
    <property type="entry name" value="Ribosomal_uS4_bac-type"/>
</dbReference>
<dbReference type="InterPro" id="IPR018079">
    <property type="entry name" value="Ribosomal_uS4_CS"/>
</dbReference>
<dbReference type="InterPro" id="IPR001912">
    <property type="entry name" value="Ribosomal_uS4_N"/>
</dbReference>
<dbReference type="InterPro" id="IPR002942">
    <property type="entry name" value="S4_RNA-bd"/>
</dbReference>
<dbReference type="InterPro" id="IPR036986">
    <property type="entry name" value="S4_RNA-bd_sf"/>
</dbReference>
<dbReference type="NCBIfam" id="NF003717">
    <property type="entry name" value="PRK05327.1"/>
    <property type="match status" value="1"/>
</dbReference>
<dbReference type="NCBIfam" id="TIGR01017">
    <property type="entry name" value="rpsD_bact"/>
    <property type="match status" value="1"/>
</dbReference>
<dbReference type="PANTHER" id="PTHR11831">
    <property type="entry name" value="30S 40S RIBOSOMAL PROTEIN"/>
    <property type="match status" value="1"/>
</dbReference>
<dbReference type="PANTHER" id="PTHR11831:SF4">
    <property type="entry name" value="SMALL RIBOSOMAL SUBUNIT PROTEIN US4M"/>
    <property type="match status" value="1"/>
</dbReference>
<dbReference type="Pfam" id="PF00163">
    <property type="entry name" value="Ribosomal_S4"/>
    <property type="match status" value="1"/>
</dbReference>
<dbReference type="Pfam" id="PF01479">
    <property type="entry name" value="S4"/>
    <property type="match status" value="1"/>
</dbReference>
<dbReference type="SMART" id="SM01390">
    <property type="entry name" value="Ribosomal_S4"/>
    <property type="match status" value="1"/>
</dbReference>
<dbReference type="SMART" id="SM00363">
    <property type="entry name" value="S4"/>
    <property type="match status" value="1"/>
</dbReference>
<dbReference type="SUPFAM" id="SSF55174">
    <property type="entry name" value="Alpha-L RNA-binding motif"/>
    <property type="match status" value="1"/>
</dbReference>
<dbReference type="PROSITE" id="PS00632">
    <property type="entry name" value="RIBOSOMAL_S4"/>
    <property type="match status" value="1"/>
</dbReference>
<dbReference type="PROSITE" id="PS50889">
    <property type="entry name" value="S4"/>
    <property type="match status" value="1"/>
</dbReference>
<reference key="1">
    <citation type="journal article" date="2008" name="BMC Microbiol.">
        <title>Complete genome sequence of Treponema pallidum ssp. pallidum strain SS14 determined with oligonucleotide arrays.</title>
        <authorList>
            <person name="Matejkova P."/>
            <person name="Strouhal M."/>
            <person name="Smajs D."/>
            <person name="Norris S.J."/>
            <person name="Palzkill T."/>
            <person name="Petrosino J.F."/>
            <person name="Sodergren E."/>
            <person name="Norton J.E."/>
            <person name="Singh J."/>
            <person name="Richmond T.A."/>
            <person name="Molla M.N."/>
            <person name="Albert T.J."/>
            <person name="Weinstock G.M."/>
        </authorList>
    </citation>
    <scope>NUCLEOTIDE SEQUENCE [LARGE SCALE GENOMIC DNA]</scope>
    <source>
        <strain>SS14</strain>
    </source>
</reference>
<evidence type="ECO:0000255" key="1">
    <source>
        <dbReference type="HAMAP-Rule" id="MF_01306"/>
    </source>
</evidence>
<evidence type="ECO:0000305" key="2"/>
<feature type="chain" id="PRO_1000140812" description="Small ribosomal subunit protein uS4">
    <location>
        <begin position="1"/>
        <end position="204"/>
    </location>
</feature>
<feature type="domain" description="S4 RNA-binding" evidence="1">
    <location>
        <begin position="95"/>
        <end position="157"/>
    </location>
</feature>
<protein>
    <recommendedName>
        <fullName evidence="1">Small ribosomal subunit protein uS4</fullName>
    </recommendedName>
    <alternativeName>
        <fullName evidence="2">30S ribosomal protein S4</fullName>
    </alternativeName>
</protein>
<keyword id="KW-0687">Ribonucleoprotein</keyword>
<keyword id="KW-0689">Ribosomal protein</keyword>
<keyword id="KW-0694">RNA-binding</keyword>
<keyword id="KW-0699">rRNA-binding</keyword>